<organism>
    <name type="scientific">Limosilactobacillus fermentum (strain NBRC 3956 / LMG 18251)</name>
    <name type="common">Lactobacillus fermentum</name>
    <dbReference type="NCBI Taxonomy" id="334390"/>
    <lineage>
        <taxon>Bacteria</taxon>
        <taxon>Bacillati</taxon>
        <taxon>Bacillota</taxon>
        <taxon>Bacilli</taxon>
        <taxon>Lactobacillales</taxon>
        <taxon>Lactobacillaceae</taxon>
        <taxon>Limosilactobacillus</taxon>
    </lineage>
</organism>
<gene>
    <name evidence="1" type="primary">rexB</name>
    <name type="ordered locus">LAF_0036</name>
</gene>
<dbReference type="EC" id="3.1.-.-" evidence="1"/>
<dbReference type="EMBL" id="AP008937">
    <property type="protein sequence ID" value="BAG26372.1"/>
    <property type="molecule type" value="Genomic_DNA"/>
</dbReference>
<dbReference type="RefSeq" id="WP_012390673.1">
    <property type="nucleotide sequence ID" value="NC_010610.1"/>
</dbReference>
<dbReference type="SMR" id="B2GEY3"/>
<dbReference type="KEGG" id="lfe:LAF_0036"/>
<dbReference type="PATRIC" id="fig|334390.5.peg.35"/>
<dbReference type="eggNOG" id="COG3857">
    <property type="taxonomic scope" value="Bacteria"/>
</dbReference>
<dbReference type="HOGENOM" id="CLU_007838_0_0_9"/>
<dbReference type="Proteomes" id="UP000001697">
    <property type="component" value="Chromosome"/>
</dbReference>
<dbReference type="GO" id="GO:0008409">
    <property type="term" value="F:5'-3' exonuclease activity"/>
    <property type="evidence" value="ECO:0007669"/>
    <property type="project" value="UniProtKB-UniRule"/>
</dbReference>
<dbReference type="GO" id="GO:0005524">
    <property type="term" value="F:ATP binding"/>
    <property type="evidence" value="ECO:0007669"/>
    <property type="project" value="UniProtKB-UniRule"/>
</dbReference>
<dbReference type="GO" id="GO:0003690">
    <property type="term" value="F:double-stranded DNA binding"/>
    <property type="evidence" value="ECO:0007669"/>
    <property type="project" value="UniProtKB-UniRule"/>
</dbReference>
<dbReference type="GO" id="GO:0004386">
    <property type="term" value="F:helicase activity"/>
    <property type="evidence" value="ECO:0007669"/>
    <property type="project" value="UniProtKB-KW"/>
</dbReference>
<dbReference type="GO" id="GO:0016817">
    <property type="term" value="F:hydrolase activity, acting on acid anhydrides"/>
    <property type="evidence" value="ECO:0007669"/>
    <property type="project" value="InterPro"/>
</dbReference>
<dbReference type="GO" id="GO:0000724">
    <property type="term" value="P:double-strand break repair via homologous recombination"/>
    <property type="evidence" value="ECO:0007669"/>
    <property type="project" value="UniProtKB-UniRule"/>
</dbReference>
<dbReference type="Gene3D" id="3.40.50.300">
    <property type="entry name" value="P-loop containing nucleotide triphosphate hydrolases"/>
    <property type="match status" value="3"/>
</dbReference>
<dbReference type="HAMAP" id="MF_01453">
    <property type="entry name" value="AddB_type2"/>
    <property type="match status" value="1"/>
</dbReference>
<dbReference type="InterPro" id="IPR049035">
    <property type="entry name" value="ADDB_N"/>
</dbReference>
<dbReference type="InterPro" id="IPR014141">
    <property type="entry name" value="DNA_helicase_suRexB"/>
</dbReference>
<dbReference type="InterPro" id="IPR027417">
    <property type="entry name" value="P-loop_NTPase"/>
</dbReference>
<dbReference type="InterPro" id="IPR038726">
    <property type="entry name" value="PDDEXK_AddAB-type"/>
</dbReference>
<dbReference type="PANTHER" id="PTHR30591">
    <property type="entry name" value="RECBCD ENZYME SUBUNIT RECC"/>
    <property type="match status" value="1"/>
</dbReference>
<dbReference type="PANTHER" id="PTHR30591:SF1">
    <property type="entry name" value="RECBCD ENZYME SUBUNIT RECC"/>
    <property type="match status" value="1"/>
</dbReference>
<dbReference type="Pfam" id="PF21445">
    <property type="entry name" value="ADDB_N"/>
    <property type="match status" value="1"/>
</dbReference>
<dbReference type="Pfam" id="PF12705">
    <property type="entry name" value="PDDEXK_1"/>
    <property type="match status" value="1"/>
</dbReference>
<dbReference type="SUPFAM" id="SSF52540">
    <property type="entry name" value="P-loop containing nucleoside triphosphate hydrolases"/>
    <property type="match status" value="1"/>
</dbReference>
<feature type="chain" id="PRO_0000379371" description="ATP-dependent helicase/deoxyribonuclease subunit B">
    <location>
        <begin position="1"/>
        <end position="1245"/>
    </location>
</feature>
<feature type="region of interest" description="Disordered" evidence="2">
    <location>
        <begin position="737"/>
        <end position="758"/>
    </location>
</feature>
<feature type="compositionally biased region" description="Basic and acidic residues" evidence="2">
    <location>
        <begin position="748"/>
        <end position="758"/>
    </location>
</feature>
<reference key="1">
    <citation type="journal article" date="2008" name="DNA Res.">
        <title>Comparative genome analysis of Lactobacillus reuteri and Lactobacillus fermentum reveal a genomic island for reuterin and cobalamin production.</title>
        <authorList>
            <person name="Morita H."/>
            <person name="Toh H."/>
            <person name="Fukuda S."/>
            <person name="Horikawa H."/>
            <person name="Oshima K."/>
            <person name="Suzuki T."/>
            <person name="Murakami M."/>
            <person name="Hisamatsu S."/>
            <person name="Kato Y."/>
            <person name="Takizawa T."/>
            <person name="Fukuoka H."/>
            <person name="Yoshimura T."/>
            <person name="Itoh K."/>
            <person name="O'Sullivan D.J."/>
            <person name="McKay L.L."/>
            <person name="Ohno H."/>
            <person name="Kikuchi J."/>
            <person name="Masaoka T."/>
            <person name="Hattori M."/>
        </authorList>
    </citation>
    <scope>NUCLEOTIDE SEQUENCE [LARGE SCALE GENOMIC DNA]</scope>
    <source>
        <strain>NBRC 3956 / LMG 18251</strain>
    </source>
</reference>
<proteinExistence type="inferred from homology"/>
<evidence type="ECO:0000255" key="1">
    <source>
        <dbReference type="HAMAP-Rule" id="MF_01453"/>
    </source>
</evidence>
<evidence type="ECO:0000256" key="2">
    <source>
        <dbReference type="SAM" id="MobiDB-lite"/>
    </source>
</evidence>
<protein>
    <recommendedName>
        <fullName evidence="1">ATP-dependent helicase/deoxyribonuclease subunit B</fullName>
        <ecNumber evidence="1">3.1.-.-</ecNumber>
    </recommendedName>
    <alternativeName>
        <fullName evidence="1">ATP-dependent helicase/nuclease subunit RexB</fullName>
    </alternativeName>
</protein>
<accession>B2GEY3</accession>
<name>ADDB_LIMF3</name>
<keyword id="KW-0067">ATP-binding</keyword>
<keyword id="KW-0227">DNA damage</keyword>
<keyword id="KW-0234">DNA repair</keyword>
<keyword id="KW-0238">DNA-binding</keyword>
<keyword id="KW-0269">Exonuclease</keyword>
<keyword id="KW-0347">Helicase</keyword>
<keyword id="KW-0378">Hydrolase</keyword>
<keyword id="KW-0540">Nuclease</keyword>
<keyword id="KW-0547">Nucleotide-binding</keyword>
<keyword id="KW-1185">Reference proteome</keyword>
<comment type="function">
    <text evidence="1">The heterodimer acts as both an ATP-dependent DNA helicase and an ATP-dependent, dual-direction single-stranded exonuclease. Recognizes the chi site generating a DNA molecule suitable for the initiation of homologous recombination. This subunit has 5' -&gt; 3' nuclease activity but not helicase activity.</text>
</comment>
<comment type="cofactor">
    <cofactor evidence="1">
        <name>Mg(2+)</name>
        <dbReference type="ChEBI" id="CHEBI:18420"/>
    </cofactor>
</comment>
<comment type="subunit">
    <text evidence="1">Heterodimer of AddA and RexB.</text>
</comment>
<comment type="miscellaneous">
    <text evidence="1">Despite having helicase-like domains, this subunit does not have helicase activity.</text>
</comment>
<comment type="similarity">
    <text evidence="1">Belongs to the helicase family. AddB/RexB type 2 subfamily.</text>
</comment>
<sequence length="1245" mass="139712">MATLQFVLGSASFDHQQVMLDRLAAQYQQAPNDTYLYLVPNHVKFTTEVAVLKGLKKRLKQTGNYAQANVAVLSFSRLGWFLCKDDPDYQKPRLSNVGMAMVVAKIIRELKAESPDLLKMFRGESERQGFATEVTKQLVELQNANIQPADLAPDQETGIIKRALASQAGGGRASQSTVFTDKMTVLYEIYRRFEAAVTTHVTAPDRSAMLLNHLEAADLSTTHVYLDRFAGEFSAQEQLIVDALIQRAADTTVSLILDRDYRGRELPSQNNLYYRSAKQYQDLLNLATQQVGVDVLDPIVLNQPNQRRVSDALVGVEEWMEADARFALPDRLPAPTDQVGFFTAPTRVAELNRVATKIRQLVATGQYRYRDFLVVTRHLDGYQTMLEPIFSRHQIPVFNDNQRPMATSPLATFTAALFKVLKDYYQEADVMELLKTGLLVPETPEELQQEGRAKRNPNTFMTAVYRTENYCLKFGKGGRSWFDERPWRLEGEQPESDALKRQNAQINWVKNYIKDELAPALADLQTATTGRELATKFYQFLLDQGVRHQLYSWAHQAQESGQLTQLRDVQQIWQTFGTLLDEYVTILGDQVAPTEQPGQLVAEFADLMNAGFNAGRYAQIPSTLDQVLVSESGMIQDNQRKVLFIMGATDDVMPEVKASEGLLSDPDRELLKRGLNDDQFLPISGTDQINNEPFLNYLSMLSVTERLYMSAPLMSSDDSELTLSPYLKGLARHFNQWDDQNNAPTTDLPDRPNPRASEDDVWSFVAAPAVTMGNLIEVERLSKDTGRKLTSAWRDVARALTRYDEGLTGRLNDIRDGQYAKNEAVPLQPELAARLYTTNRQGQVTNQLTASISQLEKFYQNPYDYFLRYGLHLKKRDELEVSSDKSGTLNHDALAFFVQSVIDEPDLQLADLVKEEHQGRQAELIDQAFEQAMNQQEELRELAANNSRVNLQLQVAKQLITTMAKTLCLQATQTDAQPVAVEKAFGQADWTGESQAAELPALTFDLTGAGLGEGAKVSLRGRIDRLDELKLGEQTYQLVVDYKSYNKAFDLVDAYAGQALQMLAYLNALQAANPGKQLLGSLYLRLYVPTVDAGKEGTAEELKEHLYQGITINDDAVLAALDHGLGEKGATLLSIKKKSKKDTSRFKVSADDQFSAKAGSNLVSPTDLKRLMDHNAELIKEAAVQILQGQNEIRPYRRQVGTTAETGLAFSDFLDVSRFDQALDDYKEIELTDADVEAKFEQEEE</sequence>